<reference key="1">
    <citation type="journal article" date="2006" name="Nat. Biotechnol.">
        <title>Genome sequence of the bioplastic-producing 'Knallgas' bacterium Ralstonia eutropha H16.</title>
        <authorList>
            <person name="Pohlmann A."/>
            <person name="Fricke W.F."/>
            <person name="Reinecke F."/>
            <person name="Kusian B."/>
            <person name="Liesegang H."/>
            <person name="Cramm R."/>
            <person name="Eitinger T."/>
            <person name="Ewering C."/>
            <person name="Poetter M."/>
            <person name="Schwartz E."/>
            <person name="Strittmatter A."/>
            <person name="Voss I."/>
            <person name="Gottschalk G."/>
            <person name="Steinbuechel A."/>
            <person name="Friedrich B."/>
            <person name="Bowien B."/>
        </authorList>
    </citation>
    <scope>NUCLEOTIDE SEQUENCE [LARGE SCALE GENOMIC DNA]</scope>
    <source>
        <strain>ATCC 17699 / DSM 428 / KCTC 22496 / NCIMB 10442 / H16 / Stanier 337</strain>
    </source>
</reference>
<comment type="function">
    <text evidence="1">Catalyzes the ATP- as well as the pyrophosphate-dependent phosphorylation of a specific serine residue in HPr, a phosphocarrier protein of the phosphoenolpyruvate-dependent sugar phosphotransferase system (PTS). HprK/P also catalyzes the pyrophosphate-producing, inorganic phosphate-dependent dephosphorylation (phosphorolysis) of seryl-phosphorylated HPr (P-Ser-HPr).</text>
</comment>
<comment type="catalytic activity">
    <reaction evidence="1">
        <text>[HPr protein]-L-serine + ATP = [HPr protein]-O-phospho-L-serine + ADP + H(+)</text>
        <dbReference type="Rhea" id="RHEA:46600"/>
        <dbReference type="Rhea" id="RHEA-COMP:11602"/>
        <dbReference type="Rhea" id="RHEA-COMP:11603"/>
        <dbReference type="ChEBI" id="CHEBI:15378"/>
        <dbReference type="ChEBI" id="CHEBI:29999"/>
        <dbReference type="ChEBI" id="CHEBI:30616"/>
        <dbReference type="ChEBI" id="CHEBI:83421"/>
        <dbReference type="ChEBI" id="CHEBI:456216"/>
    </reaction>
</comment>
<comment type="catalytic activity">
    <reaction evidence="1">
        <text>[HPr protein]-O-phospho-L-serine + phosphate + H(+) = [HPr protein]-L-serine + diphosphate</text>
        <dbReference type="Rhea" id="RHEA:46604"/>
        <dbReference type="Rhea" id="RHEA-COMP:11602"/>
        <dbReference type="Rhea" id="RHEA-COMP:11603"/>
        <dbReference type="ChEBI" id="CHEBI:15378"/>
        <dbReference type="ChEBI" id="CHEBI:29999"/>
        <dbReference type="ChEBI" id="CHEBI:33019"/>
        <dbReference type="ChEBI" id="CHEBI:43474"/>
        <dbReference type="ChEBI" id="CHEBI:83421"/>
    </reaction>
</comment>
<comment type="cofactor">
    <cofactor evidence="1">
        <name>Mg(2+)</name>
        <dbReference type="ChEBI" id="CHEBI:18420"/>
    </cofactor>
</comment>
<comment type="subunit">
    <text evidence="1">Homohexamer.</text>
</comment>
<comment type="domain">
    <text evidence="1">The Walker A ATP-binding motif also binds Pi and PPi.</text>
</comment>
<comment type="miscellaneous">
    <text evidence="1">Both phosphorylation and phosphorolysis are carried out by the same active site and suggest a common mechanism for both reactions.</text>
</comment>
<comment type="similarity">
    <text evidence="1">Belongs to the HPrK/P family.</text>
</comment>
<gene>
    <name evidence="1" type="primary">hprK</name>
    <name type="ordered locus">H16_A0383</name>
</gene>
<proteinExistence type="inferred from homology"/>
<accession>Q0KEN8</accession>
<protein>
    <recommendedName>
        <fullName evidence="1">HPr kinase/phosphorylase</fullName>
        <shortName evidence="1">HPrK/P</shortName>
        <ecNumber evidence="1">2.7.11.-</ecNumber>
        <ecNumber evidence="1">2.7.4.-</ecNumber>
    </recommendedName>
    <alternativeName>
        <fullName evidence="1">HPr(Ser) kinase/phosphorylase</fullName>
    </alternativeName>
</protein>
<organism>
    <name type="scientific">Cupriavidus necator (strain ATCC 17699 / DSM 428 / KCTC 22496 / NCIMB 10442 / H16 / Stanier 337)</name>
    <name type="common">Ralstonia eutropha</name>
    <dbReference type="NCBI Taxonomy" id="381666"/>
    <lineage>
        <taxon>Bacteria</taxon>
        <taxon>Pseudomonadati</taxon>
        <taxon>Pseudomonadota</taxon>
        <taxon>Betaproteobacteria</taxon>
        <taxon>Burkholderiales</taxon>
        <taxon>Burkholderiaceae</taxon>
        <taxon>Cupriavidus</taxon>
    </lineage>
</organism>
<dbReference type="EC" id="2.7.11.-" evidence="1"/>
<dbReference type="EC" id="2.7.4.-" evidence="1"/>
<dbReference type="EMBL" id="AM260479">
    <property type="protein sequence ID" value="CAJ91533.1"/>
    <property type="molecule type" value="Genomic_DNA"/>
</dbReference>
<dbReference type="RefSeq" id="WP_010814384.1">
    <property type="nucleotide sequence ID" value="NZ_CP039287.1"/>
</dbReference>
<dbReference type="SMR" id="Q0KEN8"/>
<dbReference type="STRING" id="381666.H16_A0383"/>
<dbReference type="GeneID" id="34308919"/>
<dbReference type="KEGG" id="reh:H16_A0383"/>
<dbReference type="eggNOG" id="COG1493">
    <property type="taxonomic scope" value="Bacteria"/>
</dbReference>
<dbReference type="HOGENOM" id="CLU_052030_0_2_4"/>
<dbReference type="OrthoDB" id="9778803at2"/>
<dbReference type="Proteomes" id="UP000008210">
    <property type="component" value="Chromosome 1"/>
</dbReference>
<dbReference type="GO" id="GO:0005524">
    <property type="term" value="F:ATP binding"/>
    <property type="evidence" value="ECO:0007669"/>
    <property type="project" value="UniProtKB-UniRule"/>
</dbReference>
<dbReference type="GO" id="GO:0000287">
    <property type="term" value="F:magnesium ion binding"/>
    <property type="evidence" value="ECO:0007669"/>
    <property type="project" value="UniProtKB-UniRule"/>
</dbReference>
<dbReference type="GO" id="GO:0000155">
    <property type="term" value="F:phosphorelay sensor kinase activity"/>
    <property type="evidence" value="ECO:0007669"/>
    <property type="project" value="InterPro"/>
</dbReference>
<dbReference type="GO" id="GO:0004674">
    <property type="term" value="F:protein serine/threonine kinase activity"/>
    <property type="evidence" value="ECO:0007669"/>
    <property type="project" value="UniProtKB-KW"/>
</dbReference>
<dbReference type="GO" id="GO:0004712">
    <property type="term" value="F:protein serine/threonine/tyrosine kinase activity"/>
    <property type="evidence" value="ECO:0007669"/>
    <property type="project" value="UniProtKB-UniRule"/>
</dbReference>
<dbReference type="GO" id="GO:0006109">
    <property type="term" value="P:regulation of carbohydrate metabolic process"/>
    <property type="evidence" value="ECO:0007669"/>
    <property type="project" value="UniProtKB-UniRule"/>
</dbReference>
<dbReference type="CDD" id="cd01918">
    <property type="entry name" value="HprK_C"/>
    <property type="match status" value="1"/>
</dbReference>
<dbReference type="FunFam" id="3.40.50.300:FF:000174">
    <property type="entry name" value="HPr kinase/phosphorylase"/>
    <property type="match status" value="1"/>
</dbReference>
<dbReference type="Gene3D" id="3.40.1390.20">
    <property type="entry name" value="HprK N-terminal domain-like"/>
    <property type="match status" value="1"/>
</dbReference>
<dbReference type="Gene3D" id="3.40.50.300">
    <property type="entry name" value="P-loop containing nucleotide triphosphate hydrolases"/>
    <property type="match status" value="1"/>
</dbReference>
<dbReference type="HAMAP" id="MF_01249">
    <property type="entry name" value="HPr_kinase"/>
    <property type="match status" value="1"/>
</dbReference>
<dbReference type="InterPro" id="IPR003755">
    <property type="entry name" value="HPr(Ser)_kin/Pase"/>
</dbReference>
<dbReference type="InterPro" id="IPR011104">
    <property type="entry name" value="Hpr_kin/Pase_C"/>
</dbReference>
<dbReference type="InterPro" id="IPR011126">
    <property type="entry name" value="Hpr_kin/Pase_Hpr_N"/>
</dbReference>
<dbReference type="InterPro" id="IPR027417">
    <property type="entry name" value="P-loop_NTPase"/>
</dbReference>
<dbReference type="InterPro" id="IPR028979">
    <property type="entry name" value="Ser_kin/Pase_Hpr-like_N_sf"/>
</dbReference>
<dbReference type="NCBIfam" id="TIGR00679">
    <property type="entry name" value="hpr-ser"/>
    <property type="match status" value="1"/>
</dbReference>
<dbReference type="PANTHER" id="PTHR30305:SF1">
    <property type="entry name" value="HPR KINASE_PHOSPHORYLASE"/>
    <property type="match status" value="1"/>
</dbReference>
<dbReference type="PANTHER" id="PTHR30305">
    <property type="entry name" value="PROTEIN YJDM-RELATED"/>
    <property type="match status" value="1"/>
</dbReference>
<dbReference type="Pfam" id="PF07475">
    <property type="entry name" value="Hpr_kinase_C"/>
    <property type="match status" value="1"/>
</dbReference>
<dbReference type="Pfam" id="PF02603">
    <property type="entry name" value="Hpr_kinase_N"/>
    <property type="match status" value="1"/>
</dbReference>
<dbReference type="SUPFAM" id="SSF75138">
    <property type="entry name" value="HprK N-terminal domain-like"/>
    <property type="match status" value="1"/>
</dbReference>
<dbReference type="SUPFAM" id="SSF53795">
    <property type="entry name" value="PEP carboxykinase-like"/>
    <property type="match status" value="1"/>
</dbReference>
<name>HPRK_CUPNH</name>
<feature type="chain" id="PRO_1000067167" description="HPr kinase/phosphorylase">
    <location>
        <begin position="1"/>
        <end position="323"/>
    </location>
</feature>
<feature type="region of interest" description="Important for the catalytic mechanism of both phosphorylation and dephosphorylation" evidence="1">
    <location>
        <begin position="209"/>
        <end position="218"/>
    </location>
</feature>
<feature type="region of interest" description="Important for the catalytic mechanism of dephosphorylation" evidence="1">
    <location>
        <begin position="271"/>
        <end position="276"/>
    </location>
</feature>
<feature type="active site" evidence="1">
    <location>
        <position position="146"/>
    </location>
</feature>
<feature type="active site" evidence="1">
    <location>
        <position position="167"/>
    </location>
</feature>
<feature type="active site" description="Proton acceptor; for phosphorylation activity. Proton donor; for dephosphorylation activity" evidence="1">
    <location>
        <position position="185"/>
    </location>
</feature>
<feature type="active site" evidence="1">
    <location>
        <position position="250"/>
    </location>
</feature>
<feature type="binding site" evidence="1">
    <location>
        <begin position="161"/>
        <end position="168"/>
    </location>
    <ligand>
        <name>ATP</name>
        <dbReference type="ChEBI" id="CHEBI:30616"/>
    </ligand>
</feature>
<feature type="binding site" evidence="1">
    <location>
        <position position="168"/>
    </location>
    <ligand>
        <name>Mg(2+)</name>
        <dbReference type="ChEBI" id="CHEBI:18420"/>
    </ligand>
</feature>
<feature type="binding site" evidence="1">
    <location>
        <position position="210"/>
    </location>
    <ligand>
        <name>Mg(2+)</name>
        <dbReference type="ChEBI" id="CHEBI:18420"/>
    </ligand>
</feature>
<sequence>MELTGVTSQSIFDDNAADIKLSWVAGLEGADRAFDVEFAREATSAADLVGHLNLIHPNRIQVLGKPEITYYQRLDDETRKRQMGELILLEPPFLVIADGMEPPPDLELRCTRSSTPLFTTPVSSAAVIDHLRLYLSRISAPRVTMHGVFLDILGMGVLIMGESGLGKSELGLELISRGHGLVADDAVDFVRLGPDFIEGRCPPLLQNLLEVRGLGLLDIKTIFGETAVRRKMKIKLVVQLVRRNDGEFERLPLDSQYLDVLGLPIHMVKIQVAAGRNLAVLVEAAVRNTILRLRGIDTLRDFMDRQRAAMQADAVSRGQGRLL</sequence>
<keyword id="KW-0067">ATP-binding</keyword>
<keyword id="KW-0418">Kinase</keyword>
<keyword id="KW-0460">Magnesium</keyword>
<keyword id="KW-0479">Metal-binding</keyword>
<keyword id="KW-0511">Multifunctional enzyme</keyword>
<keyword id="KW-0547">Nucleotide-binding</keyword>
<keyword id="KW-1185">Reference proteome</keyword>
<keyword id="KW-0723">Serine/threonine-protein kinase</keyword>
<keyword id="KW-0808">Transferase</keyword>
<evidence type="ECO:0000255" key="1">
    <source>
        <dbReference type="HAMAP-Rule" id="MF_01249"/>
    </source>
</evidence>